<comment type="function">
    <text evidence="1">Required for the formation of a threonylcarbamoyl group on adenosine at position 37 (t(6)A37) in tRNAs that read codons beginning with adenine. Is involved in the transfer of the threonylcarbamoyl moiety of threonylcarbamoyl-AMP (TC-AMP) to the N6 group of A37, together with TsaE and TsaB. TsaD likely plays a direct catalytic role in this reaction.</text>
</comment>
<comment type="catalytic activity">
    <reaction evidence="1">
        <text>L-threonylcarbamoyladenylate + adenosine(37) in tRNA = N(6)-L-threonylcarbamoyladenosine(37) in tRNA + AMP + H(+)</text>
        <dbReference type="Rhea" id="RHEA:37059"/>
        <dbReference type="Rhea" id="RHEA-COMP:10162"/>
        <dbReference type="Rhea" id="RHEA-COMP:10163"/>
        <dbReference type="ChEBI" id="CHEBI:15378"/>
        <dbReference type="ChEBI" id="CHEBI:73682"/>
        <dbReference type="ChEBI" id="CHEBI:74411"/>
        <dbReference type="ChEBI" id="CHEBI:74418"/>
        <dbReference type="ChEBI" id="CHEBI:456215"/>
        <dbReference type="EC" id="2.3.1.234"/>
    </reaction>
</comment>
<comment type="cofactor">
    <cofactor evidence="1">
        <name>Fe(2+)</name>
        <dbReference type="ChEBI" id="CHEBI:29033"/>
    </cofactor>
    <text evidence="1">Binds 1 Fe(2+) ion per subunit.</text>
</comment>
<comment type="subcellular location">
    <subcellularLocation>
        <location evidence="1">Cytoplasm</location>
    </subcellularLocation>
</comment>
<comment type="similarity">
    <text evidence="1">Belongs to the KAE1 / TsaD family.</text>
</comment>
<proteinExistence type="inferred from homology"/>
<keyword id="KW-0012">Acyltransferase</keyword>
<keyword id="KW-0963">Cytoplasm</keyword>
<keyword id="KW-0408">Iron</keyword>
<keyword id="KW-0479">Metal-binding</keyword>
<keyword id="KW-1185">Reference proteome</keyword>
<keyword id="KW-0808">Transferase</keyword>
<keyword id="KW-0819">tRNA processing</keyword>
<sequence>MILGIESSCDDSSIALMDENSLKLNYFSKISQEIKHAKFGGVVPELAARLHTKALPEMIEKIKPYFSEISAIAVTNEPGLSVSLIGGVSMAKALSISLNKPLIAVNHLVGHIFSVFLDKKEIFPLGVLLVSGGHTLVLDISANGKISVLAKTGDDSFGESFDKVAKMLGLDYPGGALIENLAKNCDGNLNFTIPLLHDKRLEYSFSGLKNQVRMEIEKAGEISQSVQENIAASFQKTAIAHIMDKLSKIYEMKKWQNFAVVGGASANSALRTKLENLANKYGSTLHLAPLKFCSDNAAMIARAGVYKYNKKEFINYKNLDIVPHLNYENFKI</sequence>
<gene>
    <name evidence="1" type="primary">tsaD</name>
    <name type="synonym">gcp</name>
    <name type="ordered locus">CHAB381_0120</name>
</gene>
<protein>
    <recommendedName>
        <fullName evidence="1">tRNA N6-adenosine threonylcarbamoyltransferase</fullName>
        <ecNumber evidence="1">2.3.1.234</ecNumber>
    </recommendedName>
    <alternativeName>
        <fullName evidence="1">N6-L-threonylcarbamoyladenine synthase</fullName>
        <shortName evidence="1">t(6)A synthase</shortName>
    </alternativeName>
    <alternativeName>
        <fullName evidence="1">t(6)A37 threonylcarbamoyladenosine biosynthesis protein TsaD</fullName>
    </alternativeName>
    <alternativeName>
        <fullName evidence="1">tRNA threonylcarbamoyladenosine biosynthesis protein TsaD</fullName>
    </alternativeName>
</protein>
<dbReference type="EC" id="2.3.1.234" evidence="1"/>
<dbReference type="EMBL" id="CP000776">
    <property type="protein sequence ID" value="ABS51033.1"/>
    <property type="molecule type" value="Genomic_DNA"/>
</dbReference>
<dbReference type="RefSeq" id="WP_011991580.1">
    <property type="nucleotide sequence ID" value="NC_009714.1"/>
</dbReference>
<dbReference type="SMR" id="A7HZP2"/>
<dbReference type="STRING" id="360107.CHAB381_0120"/>
<dbReference type="KEGG" id="cha:CHAB381_0120"/>
<dbReference type="eggNOG" id="COG0533">
    <property type="taxonomic scope" value="Bacteria"/>
</dbReference>
<dbReference type="HOGENOM" id="CLU_023208_0_3_7"/>
<dbReference type="OrthoDB" id="9806197at2"/>
<dbReference type="Proteomes" id="UP000002407">
    <property type="component" value="Chromosome"/>
</dbReference>
<dbReference type="GO" id="GO:0005737">
    <property type="term" value="C:cytoplasm"/>
    <property type="evidence" value="ECO:0007669"/>
    <property type="project" value="UniProtKB-SubCell"/>
</dbReference>
<dbReference type="GO" id="GO:0005506">
    <property type="term" value="F:iron ion binding"/>
    <property type="evidence" value="ECO:0007669"/>
    <property type="project" value="UniProtKB-UniRule"/>
</dbReference>
<dbReference type="GO" id="GO:0061711">
    <property type="term" value="F:N(6)-L-threonylcarbamoyladenine synthase activity"/>
    <property type="evidence" value="ECO:0007669"/>
    <property type="project" value="UniProtKB-EC"/>
</dbReference>
<dbReference type="GO" id="GO:0002949">
    <property type="term" value="P:tRNA threonylcarbamoyladenosine modification"/>
    <property type="evidence" value="ECO:0007669"/>
    <property type="project" value="UniProtKB-UniRule"/>
</dbReference>
<dbReference type="Gene3D" id="3.30.420.40">
    <property type="match status" value="2"/>
</dbReference>
<dbReference type="HAMAP" id="MF_01445">
    <property type="entry name" value="TsaD"/>
    <property type="match status" value="1"/>
</dbReference>
<dbReference type="InterPro" id="IPR043129">
    <property type="entry name" value="ATPase_NBD"/>
</dbReference>
<dbReference type="InterPro" id="IPR000905">
    <property type="entry name" value="Gcp-like_dom"/>
</dbReference>
<dbReference type="InterPro" id="IPR017861">
    <property type="entry name" value="KAE1/TsaD"/>
</dbReference>
<dbReference type="InterPro" id="IPR017860">
    <property type="entry name" value="Peptidase_M22_CS"/>
</dbReference>
<dbReference type="InterPro" id="IPR022450">
    <property type="entry name" value="TsaD"/>
</dbReference>
<dbReference type="NCBIfam" id="TIGR00329">
    <property type="entry name" value="gcp_kae1"/>
    <property type="match status" value="1"/>
</dbReference>
<dbReference type="NCBIfam" id="TIGR03723">
    <property type="entry name" value="T6A_TsaD_YgjD"/>
    <property type="match status" value="1"/>
</dbReference>
<dbReference type="PANTHER" id="PTHR11735">
    <property type="entry name" value="TRNA N6-ADENOSINE THREONYLCARBAMOYLTRANSFERASE"/>
    <property type="match status" value="1"/>
</dbReference>
<dbReference type="PANTHER" id="PTHR11735:SF6">
    <property type="entry name" value="TRNA N6-ADENOSINE THREONYLCARBAMOYLTRANSFERASE, MITOCHONDRIAL"/>
    <property type="match status" value="1"/>
</dbReference>
<dbReference type="Pfam" id="PF00814">
    <property type="entry name" value="TsaD"/>
    <property type="match status" value="1"/>
</dbReference>
<dbReference type="PRINTS" id="PR00789">
    <property type="entry name" value="OSIALOPTASE"/>
</dbReference>
<dbReference type="SUPFAM" id="SSF53067">
    <property type="entry name" value="Actin-like ATPase domain"/>
    <property type="match status" value="1"/>
</dbReference>
<dbReference type="PROSITE" id="PS01016">
    <property type="entry name" value="GLYCOPROTEASE"/>
    <property type="match status" value="1"/>
</dbReference>
<feature type="chain" id="PRO_1000024427" description="tRNA N6-adenosine threonylcarbamoyltransferase">
    <location>
        <begin position="1"/>
        <end position="332"/>
    </location>
</feature>
<feature type="binding site" evidence="1">
    <location>
        <position position="107"/>
    </location>
    <ligand>
        <name>Fe cation</name>
        <dbReference type="ChEBI" id="CHEBI:24875"/>
    </ligand>
</feature>
<feature type="binding site" evidence="1">
    <location>
        <position position="111"/>
    </location>
    <ligand>
        <name>Fe cation</name>
        <dbReference type="ChEBI" id="CHEBI:24875"/>
    </ligand>
</feature>
<feature type="binding site" evidence="1">
    <location>
        <begin position="129"/>
        <end position="133"/>
    </location>
    <ligand>
        <name>substrate</name>
    </ligand>
</feature>
<feature type="binding site" evidence="1">
    <location>
        <position position="162"/>
    </location>
    <ligand>
        <name>substrate</name>
    </ligand>
</feature>
<feature type="binding site" evidence="1">
    <location>
        <position position="175"/>
    </location>
    <ligand>
        <name>substrate</name>
    </ligand>
</feature>
<feature type="binding site" evidence="1">
    <location>
        <position position="267"/>
    </location>
    <ligand>
        <name>substrate</name>
    </ligand>
</feature>
<feature type="binding site" evidence="1">
    <location>
        <position position="295"/>
    </location>
    <ligand>
        <name>Fe cation</name>
        <dbReference type="ChEBI" id="CHEBI:24875"/>
    </ligand>
</feature>
<name>TSAD_CAMHC</name>
<accession>A7HZP2</accession>
<organism>
    <name type="scientific">Campylobacter hominis (strain ATCC BAA-381 / DSM 21671 / CCUG 45161 / LMG 19568 / NCTC 13146 / CH001A)</name>
    <dbReference type="NCBI Taxonomy" id="360107"/>
    <lineage>
        <taxon>Bacteria</taxon>
        <taxon>Pseudomonadati</taxon>
        <taxon>Campylobacterota</taxon>
        <taxon>Epsilonproteobacteria</taxon>
        <taxon>Campylobacterales</taxon>
        <taxon>Campylobacteraceae</taxon>
        <taxon>Campylobacter</taxon>
    </lineage>
</organism>
<evidence type="ECO:0000255" key="1">
    <source>
        <dbReference type="HAMAP-Rule" id="MF_01445"/>
    </source>
</evidence>
<reference key="1">
    <citation type="submission" date="2007-07" db="EMBL/GenBank/DDBJ databases">
        <title>Complete genome sequence of Campylobacter hominis ATCC BAA-381, a commensal isolated from the human gastrointestinal tract.</title>
        <authorList>
            <person name="Fouts D.E."/>
            <person name="Mongodin E.F."/>
            <person name="Puiu D."/>
            <person name="Sebastian Y."/>
            <person name="Miller W.G."/>
            <person name="Mandrell R.E."/>
            <person name="Nelson K.E."/>
        </authorList>
    </citation>
    <scope>NUCLEOTIDE SEQUENCE [LARGE SCALE GENOMIC DNA]</scope>
    <source>
        <strain>ATCC BAA-381 / DSM 21671 / CCUG 45161 / LMG 19568 / NCTC 13146 / CH001A</strain>
    </source>
</reference>